<sequence>MADLEEQLSDEEKVRIAAKFIIHAPPGEFNEVFNDVRLLLNNDNLLREGAAHAFAQYNLDQFTPVKIEGYEDQVLITEHGDLGNGKFLDPKNRICFKFDHLRKEATDPRPCEVENAIESWRTSVETALRAYVKEHYPNGVCTVYGKKIDGQQTIIACIESHQFQAKNFWNGRWRSEWKFTITPSTTQVVGILKIQVHYYEDGNVQLVSHKDIQDSLTVSNEVQTAKEFIKIVEAAENEYQTAISENYQTMSDTTFKALRRQLPVTRTKIDWNKILSYKIGKEMQNA</sequence>
<protein>
    <recommendedName>
        <fullName>F-actin-capping protein subunit alpha-2</fullName>
    </recommendedName>
    <alternativeName>
        <fullName>CapZ alpha-2</fullName>
    </alternativeName>
</protein>
<organism>
    <name type="scientific">Callithrix jacchus</name>
    <name type="common">White-tufted-ear marmoset</name>
    <dbReference type="NCBI Taxonomy" id="9483"/>
    <lineage>
        <taxon>Eukaryota</taxon>
        <taxon>Metazoa</taxon>
        <taxon>Chordata</taxon>
        <taxon>Craniata</taxon>
        <taxon>Vertebrata</taxon>
        <taxon>Euteleostomi</taxon>
        <taxon>Mammalia</taxon>
        <taxon>Eutheria</taxon>
        <taxon>Euarchontoglires</taxon>
        <taxon>Primates</taxon>
        <taxon>Haplorrhini</taxon>
        <taxon>Platyrrhini</taxon>
        <taxon>Cebidae</taxon>
        <taxon>Callitrichinae</taxon>
        <taxon>Callithrix</taxon>
        <taxon>Callithrix</taxon>
    </lineage>
</organism>
<keyword id="KW-0007">Acetylation</keyword>
<keyword id="KW-0117">Actin capping</keyword>
<keyword id="KW-0009">Actin-binding</keyword>
<keyword id="KW-0597">Phosphoprotein</keyword>
<keyword id="KW-1185">Reference proteome</keyword>
<feature type="initiator methionine" description="Removed" evidence="2">
    <location>
        <position position="1"/>
    </location>
</feature>
<feature type="chain" id="PRO_0000226314" description="F-actin-capping protein subunit alpha-2">
    <location>
        <begin position="2"/>
        <end position="286"/>
    </location>
</feature>
<feature type="modified residue" description="N-acetylalanine" evidence="2">
    <location>
        <position position="2"/>
    </location>
</feature>
<feature type="modified residue" description="Phosphoserine" evidence="2">
    <location>
        <position position="9"/>
    </location>
</feature>
<dbReference type="EMBL" id="DP000014">
    <property type="protein sequence ID" value="ABA90392.1"/>
    <property type="molecule type" value="Genomic_DNA"/>
</dbReference>
<dbReference type="RefSeq" id="XP_002751816.1">
    <property type="nucleotide sequence ID" value="XM_002751770.5"/>
</dbReference>
<dbReference type="SMR" id="Q2QLG4"/>
<dbReference type="FunCoup" id="Q2QLG4">
    <property type="interactions" value="1943"/>
</dbReference>
<dbReference type="STRING" id="9483.ENSCJAP00000078116"/>
<dbReference type="GeneID" id="100409274"/>
<dbReference type="KEGG" id="cjc:100409274"/>
<dbReference type="CTD" id="830"/>
<dbReference type="eggNOG" id="KOG0836">
    <property type="taxonomic scope" value="Eukaryota"/>
</dbReference>
<dbReference type="HOGENOM" id="CLU_045161_0_0_1"/>
<dbReference type="InParanoid" id="Q2QLG4"/>
<dbReference type="OrthoDB" id="340550at2759"/>
<dbReference type="TreeFam" id="TF314822"/>
<dbReference type="Proteomes" id="UP000008225">
    <property type="component" value="Chromosome 8"/>
</dbReference>
<dbReference type="Bgee" id="ENSCJAG00000005079">
    <property type="expression patterns" value="Expressed in heart and 6 other cell types or tissues"/>
</dbReference>
<dbReference type="GO" id="GO:0030863">
    <property type="term" value="C:cortical cytoskeleton"/>
    <property type="evidence" value="ECO:0007669"/>
    <property type="project" value="TreeGrafter"/>
</dbReference>
<dbReference type="GO" id="GO:0008290">
    <property type="term" value="C:F-actin capping protein complex"/>
    <property type="evidence" value="ECO:0007669"/>
    <property type="project" value="InterPro"/>
</dbReference>
<dbReference type="GO" id="GO:0051015">
    <property type="term" value="F:actin filament binding"/>
    <property type="evidence" value="ECO:0007669"/>
    <property type="project" value="TreeGrafter"/>
</dbReference>
<dbReference type="GO" id="GO:0030036">
    <property type="term" value="P:actin cytoskeleton organization"/>
    <property type="evidence" value="ECO:0007669"/>
    <property type="project" value="TreeGrafter"/>
</dbReference>
<dbReference type="GO" id="GO:0051016">
    <property type="term" value="P:barbed-end actin filament capping"/>
    <property type="evidence" value="ECO:0007669"/>
    <property type="project" value="InterPro"/>
</dbReference>
<dbReference type="FunFam" id="3.30.1140.60:FF:000001">
    <property type="entry name" value="F-actin-capping protein subunit alpha"/>
    <property type="match status" value="1"/>
</dbReference>
<dbReference type="FunFam" id="3.90.1150.210:FF:000002">
    <property type="entry name" value="F-actin-capping protein subunit alpha"/>
    <property type="match status" value="1"/>
</dbReference>
<dbReference type="Gene3D" id="3.30.1140.60">
    <property type="entry name" value="F-actin capping protein, alpha subunit"/>
    <property type="match status" value="1"/>
</dbReference>
<dbReference type="Gene3D" id="3.90.1150.210">
    <property type="entry name" value="F-actin capping protein, beta subunit"/>
    <property type="match status" value="1"/>
</dbReference>
<dbReference type="InterPro" id="IPR002189">
    <property type="entry name" value="CapZ_alpha"/>
</dbReference>
<dbReference type="InterPro" id="IPR037282">
    <property type="entry name" value="CapZ_alpha/beta"/>
</dbReference>
<dbReference type="InterPro" id="IPR042276">
    <property type="entry name" value="CapZ_alpha/beta_2"/>
</dbReference>
<dbReference type="InterPro" id="IPR042489">
    <property type="entry name" value="CapZ_alpha_1"/>
</dbReference>
<dbReference type="InterPro" id="IPR017865">
    <property type="entry name" value="F-actin_cap_asu_CS"/>
</dbReference>
<dbReference type="PANTHER" id="PTHR10653">
    <property type="entry name" value="F-ACTIN-CAPPING PROTEIN SUBUNIT ALPHA"/>
    <property type="match status" value="1"/>
</dbReference>
<dbReference type="PANTHER" id="PTHR10653:SF2">
    <property type="entry name" value="F-ACTIN-CAPPING PROTEIN SUBUNIT ALPHA-2"/>
    <property type="match status" value="1"/>
</dbReference>
<dbReference type="Pfam" id="PF01267">
    <property type="entry name" value="F-actin_cap_A"/>
    <property type="match status" value="1"/>
</dbReference>
<dbReference type="PRINTS" id="PR00191">
    <property type="entry name" value="FACTINCAPA"/>
</dbReference>
<dbReference type="SUPFAM" id="SSF90096">
    <property type="entry name" value="Subunits of heterodimeric actin filament capping protein Capz"/>
    <property type="match status" value="1"/>
</dbReference>
<dbReference type="PROSITE" id="PS00748">
    <property type="entry name" value="F_ACTIN_CAPPING_A_1"/>
    <property type="match status" value="1"/>
</dbReference>
<dbReference type="PROSITE" id="PS00749">
    <property type="entry name" value="F_ACTIN_CAPPING_A_2"/>
    <property type="match status" value="1"/>
</dbReference>
<reference key="1">
    <citation type="submission" date="2005-10" db="EMBL/GenBank/DDBJ databases">
        <title>NISC comparative sequencing initiative.</title>
        <authorList>
            <person name="Antonellis A."/>
            <person name="Ayele K."/>
            <person name="Benjamin B."/>
            <person name="Blakesley R.W."/>
            <person name="Boakye A."/>
            <person name="Bouffard G.G."/>
            <person name="Brinkley C."/>
            <person name="Brooks S."/>
            <person name="Chu G."/>
            <person name="Coleman H."/>
            <person name="Engle J."/>
            <person name="Gestole M."/>
            <person name="Greene A."/>
            <person name="Guan X."/>
            <person name="Gupta J."/>
            <person name="Haghighi P."/>
            <person name="Han J."/>
            <person name="Hansen N."/>
            <person name="Ho S.-L."/>
            <person name="Hu P."/>
            <person name="Hunter G."/>
            <person name="Hurle B."/>
            <person name="Idol J.R."/>
            <person name="Kwong P."/>
            <person name="Laric P."/>
            <person name="Larson S."/>
            <person name="Lee-Lin S.-Q."/>
            <person name="Legaspi R."/>
            <person name="Madden M."/>
            <person name="Maduro Q.L."/>
            <person name="Maduro V.B."/>
            <person name="Margulies E.H."/>
            <person name="Masiello C."/>
            <person name="Maskeri B."/>
            <person name="McDowell J."/>
            <person name="Mojidi H.A."/>
            <person name="Mullikin J.C."/>
            <person name="Oestreicher J.S."/>
            <person name="Park M."/>
            <person name="Portnoy M.E."/>
            <person name="Prasad A."/>
            <person name="Puri O."/>
            <person name="Reddix-Dugue N."/>
            <person name="Schandler K."/>
            <person name="Schueler M.G."/>
            <person name="Sison C."/>
            <person name="Stantripop S."/>
            <person name="Stephen E."/>
            <person name="Taye A."/>
            <person name="Thomas J.W."/>
            <person name="Thomas P.J."/>
            <person name="Tsipouri V."/>
            <person name="Ung L."/>
            <person name="Vogt J.L."/>
            <person name="Wetherby K.D."/>
            <person name="Young A."/>
            <person name="Green E.D."/>
        </authorList>
    </citation>
    <scope>NUCLEOTIDE SEQUENCE [LARGE SCALE GENOMIC DNA]</scope>
</reference>
<name>CAZA2_CALJA</name>
<evidence type="ECO:0000250" key="1"/>
<evidence type="ECO:0000250" key="2">
    <source>
        <dbReference type="UniProtKB" id="P47755"/>
    </source>
</evidence>
<evidence type="ECO:0000305" key="3"/>
<proteinExistence type="inferred from homology"/>
<accession>Q2QLG4</accession>
<gene>
    <name type="primary">CAPZA2</name>
</gene>
<comment type="function">
    <text evidence="1">F-actin-capping proteins bind in a Ca(2+)-independent manner to the fast growing ends of actin filaments (barbed end) thereby blocking the exchange of subunits at these ends. Unlike other capping proteins (such as gelsolin and severin), these proteins do not sever actin filaments (By similarity).</text>
</comment>
<comment type="subunit">
    <text evidence="1">Component of the F-actin capping complex, composed of a heterodimer of an alpha and a beta subunit. Component of the WASH complex, composed of F-actin-capping protein subunit alpha (CAPZA1, CAPZA2 or CAPZA3), F-actin-capping protein subunit beta (CAPZB), WASHC1, WASHC2, WASHC3, WASHC4 and WASHC5. Interacts with RCSD1/CAPZIP (By similarity).</text>
</comment>
<comment type="similarity">
    <text evidence="3">Belongs to the F-actin-capping protein alpha subunit family.</text>
</comment>